<protein>
    <recommendedName>
        <fullName evidence="1">Large ribosomal subunit protein uL1</fullName>
    </recommendedName>
    <alternativeName>
        <fullName evidence="2">50S ribosomal protein L1</fullName>
    </alternativeName>
</protein>
<proteinExistence type="inferred from homology"/>
<sequence>MAKRGKKYVEAAKLVDRAAAYSATEAVELVKKTNTAKFDATVEAAFRLGVDPKKADQQIRGAVVLPHGTGKVQRVLVFAKGEKAKEAEAAGADFVGDADYIGKIQQGWFDFDVVVATPDMMGEVGKLGRVLGPKGLMPNPKTGTVTFDVTKAVNEIKAGKVEYRVDKAGNIHVPIGKVSFEDAKLVENFRTIADTLQKVKPAAAKGTYMKNVTVASTMGPGVRVDVSTLA</sequence>
<gene>
    <name evidence="1" type="primary">rplA</name>
    <name type="ordered locus">BAA_0113</name>
</gene>
<feature type="chain" id="PRO_1000165656" description="Large ribosomal subunit protein uL1">
    <location>
        <begin position="1"/>
        <end position="230"/>
    </location>
</feature>
<accession>C3P9P3</accession>
<keyword id="KW-0678">Repressor</keyword>
<keyword id="KW-0687">Ribonucleoprotein</keyword>
<keyword id="KW-0689">Ribosomal protein</keyword>
<keyword id="KW-0694">RNA-binding</keyword>
<keyword id="KW-0699">rRNA-binding</keyword>
<keyword id="KW-0810">Translation regulation</keyword>
<keyword id="KW-0820">tRNA-binding</keyword>
<name>RL1_BACAA</name>
<evidence type="ECO:0000255" key="1">
    <source>
        <dbReference type="HAMAP-Rule" id="MF_01318"/>
    </source>
</evidence>
<evidence type="ECO:0000305" key="2"/>
<dbReference type="EMBL" id="CP001598">
    <property type="protein sequence ID" value="ACQ48812.1"/>
    <property type="molecule type" value="Genomic_DNA"/>
</dbReference>
<dbReference type="RefSeq" id="WP_002020168.1">
    <property type="nucleotide sequence ID" value="NC_012659.1"/>
</dbReference>
<dbReference type="SMR" id="C3P9P3"/>
<dbReference type="GeneID" id="93010955"/>
<dbReference type="KEGG" id="bai:BAA_0113"/>
<dbReference type="HOGENOM" id="CLU_062853_0_0_9"/>
<dbReference type="GO" id="GO:0015934">
    <property type="term" value="C:large ribosomal subunit"/>
    <property type="evidence" value="ECO:0007669"/>
    <property type="project" value="InterPro"/>
</dbReference>
<dbReference type="GO" id="GO:0019843">
    <property type="term" value="F:rRNA binding"/>
    <property type="evidence" value="ECO:0007669"/>
    <property type="project" value="UniProtKB-UniRule"/>
</dbReference>
<dbReference type="GO" id="GO:0003735">
    <property type="term" value="F:structural constituent of ribosome"/>
    <property type="evidence" value="ECO:0007669"/>
    <property type="project" value="InterPro"/>
</dbReference>
<dbReference type="GO" id="GO:0000049">
    <property type="term" value="F:tRNA binding"/>
    <property type="evidence" value="ECO:0007669"/>
    <property type="project" value="UniProtKB-KW"/>
</dbReference>
<dbReference type="GO" id="GO:0006417">
    <property type="term" value="P:regulation of translation"/>
    <property type="evidence" value="ECO:0007669"/>
    <property type="project" value="UniProtKB-KW"/>
</dbReference>
<dbReference type="GO" id="GO:0006412">
    <property type="term" value="P:translation"/>
    <property type="evidence" value="ECO:0007669"/>
    <property type="project" value="UniProtKB-UniRule"/>
</dbReference>
<dbReference type="CDD" id="cd00403">
    <property type="entry name" value="Ribosomal_L1"/>
    <property type="match status" value="1"/>
</dbReference>
<dbReference type="FunFam" id="3.40.50.790:FF:000001">
    <property type="entry name" value="50S ribosomal protein L1"/>
    <property type="match status" value="1"/>
</dbReference>
<dbReference type="Gene3D" id="3.30.190.20">
    <property type="match status" value="1"/>
</dbReference>
<dbReference type="Gene3D" id="3.40.50.790">
    <property type="match status" value="1"/>
</dbReference>
<dbReference type="HAMAP" id="MF_01318_B">
    <property type="entry name" value="Ribosomal_uL1_B"/>
    <property type="match status" value="1"/>
</dbReference>
<dbReference type="InterPro" id="IPR005878">
    <property type="entry name" value="Ribosom_uL1_bac-type"/>
</dbReference>
<dbReference type="InterPro" id="IPR002143">
    <property type="entry name" value="Ribosomal_uL1"/>
</dbReference>
<dbReference type="InterPro" id="IPR023674">
    <property type="entry name" value="Ribosomal_uL1-like"/>
</dbReference>
<dbReference type="InterPro" id="IPR028364">
    <property type="entry name" value="Ribosomal_uL1/biogenesis"/>
</dbReference>
<dbReference type="InterPro" id="IPR016095">
    <property type="entry name" value="Ribosomal_uL1_3-a/b-sand"/>
</dbReference>
<dbReference type="InterPro" id="IPR023673">
    <property type="entry name" value="Ribosomal_uL1_CS"/>
</dbReference>
<dbReference type="NCBIfam" id="TIGR01169">
    <property type="entry name" value="rplA_bact"/>
    <property type="match status" value="1"/>
</dbReference>
<dbReference type="PANTHER" id="PTHR36427">
    <property type="entry name" value="54S RIBOSOMAL PROTEIN L1, MITOCHONDRIAL"/>
    <property type="match status" value="1"/>
</dbReference>
<dbReference type="PANTHER" id="PTHR36427:SF3">
    <property type="entry name" value="LARGE RIBOSOMAL SUBUNIT PROTEIN UL1M"/>
    <property type="match status" value="1"/>
</dbReference>
<dbReference type="Pfam" id="PF00687">
    <property type="entry name" value="Ribosomal_L1"/>
    <property type="match status" value="1"/>
</dbReference>
<dbReference type="PIRSF" id="PIRSF002155">
    <property type="entry name" value="Ribosomal_L1"/>
    <property type="match status" value="1"/>
</dbReference>
<dbReference type="SUPFAM" id="SSF56808">
    <property type="entry name" value="Ribosomal protein L1"/>
    <property type="match status" value="1"/>
</dbReference>
<dbReference type="PROSITE" id="PS01199">
    <property type="entry name" value="RIBOSOMAL_L1"/>
    <property type="match status" value="1"/>
</dbReference>
<reference key="1">
    <citation type="submission" date="2009-04" db="EMBL/GenBank/DDBJ databases">
        <title>Genome sequence of Bacillus anthracis A0248.</title>
        <authorList>
            <person name="Dodson R.J."/>
            <person name="Munk A.C."/>
            <person name="Bruce D."/>
            <person name="Detter C."/>
            <person name="Tapia R."/>
            <person name="Sutton G."/>
            <person name="Sims D."/>
            <person name="Brettin T."/>
        </authorList>
    </citation>
    <scope>NUCLEOTIDE SEQUENCE [LARGE SCALE GENOMIC DNA]</scope>
    <source>
        <strain>A0248</strain>
    </source>
</reference>
<comment type="function">
    <text evidence="1">Binds directly to 23S rRNA. The L1 stalk is quite mobile in the ribosome, and is involved in E site tRNA release.</text>
</comment>
<comment type="function">
    <text evidence="1">Protein L1 is also a translational repressor protein, it controls the translation of the L11 operon by binding to its mRNA.</text>
</comment>
<comment type="subunit">
    <text evidence="1">Part of the 50S ribosomal subunit.</text>
</comment>
<comment type="similarity">
    <text evidence="1">Belongs to the universal ribosomal protein uL1 family.</text>
</comment>
<organism>
    <name type="scientific">Bacillus anthracis (strain A0248)</name>
    <dbReference type="NCBI Taxonomy" id="592021"/>
    <lineage>
        <taxon>Bacteria</taxon>
        <taxon>Bacillati</taxon>
        <taxon>Bacillota</taxon>
        <taxon>Bacilli</taxon>
        <taxon>Bacillales</taxon>
        <taxon>Bacillaceae</taxon>
        <taxon>Bacillus</taxon>
        <taxon>Bacillus cereus group</taxon>
    </lineage>
</organism>